<gene>
    <name evidence="1" type="primary">adk</name>
    <name type="ordered locus">BB_0417</name>
</gene>
<protein>
    <recommendedName>
        <fullName evidence="1">Adenylate kinase</fullName>
        <shortName evidence="1">AK</shortName>
        <ecNumber evidence="1">2.7.4.3</ecNumber>
    </recommendedName>
    <alternativeName>
        <fullName evidence="1">ATP-AMP transphosphorylase</fullName>
    </alternativeName>
    <alternativeName>
        <fullName evidence="1">ATP:AMP phosphotransferase</fullName>
    </alternativeName>
    <alternativeName>
        <fullName evidence="1">Adenylate monophosphate kinase</fullName>
    </alternativeName>
</protein>
<keyword id="KW-0067">ATP-binding</keyword>
<keyword id="KW-0963">Cytoplasm</keyword>
<keyword id="KW-0418">Kinase</keyword>
<keyword id="KW-0479">Metal-binding</keyword>
<keyword id="KW-0545">Nucleotide biosynthesis</keyword>
<keyword id="KW-0547">Nucleotide-binding</keyword>
<keyword id="KW-1185">Reference proteome</keyword>
<keyword id="KW-0808">Transferase</keyword>
<keyword id="KW-0862">Zinc</keyword>
<comment type="function">
    <text evidence="1">Catalyzes the reversible transfer of the terminal phosphate group between ATP and AMP. Plays an important role in cellular energy homeostasis and in adenine nucleotide metabolism.</text>
</comment>
<comment type="catalytic activity">
    <reaction evidence="1">
        <text>AMP + ATP = 2 ADP</text>
        <dbReference type="Rhea" id="RHEA:12973"/>
        <dbReference type="ChEBI" id="CHEBI:30616"/>
        <dbReference type="ChEBI" id="CHEBI:456215"/>
        <dbReference type="ChEBI" id="CHEBI:456216"/>
        <dbReference type="EC" id="2.7.4.3"/>
    </reaction>
</comment>
<comment type="pathway">
    <text evidence="1">Purine metabolism; AMP biosynthesis via salvage pathway; AMP from ADP: step 1/1.</text>
</comment>
<comment type="subunit">
    <text evidence="1">Monomer.</text>
</comment>
<comment type="subcellular location">
    <subcellularLocation>
        <location>Cytoplasm</location>
    </subcellularLocation>
</comment>
<comment type="domain">
    <text evidence="1">Consists of three domains, a large central CORE domain and two small peripheral domains, NMPbind and LID, which undergo movements during catalysis. The LID domain closes over the site of phosphoryl transfer upon ATP binding. Assembling and dissambling the active center during each catalytic cycle provides an effective means to prevent ATP hydrolysis. Some bacteria have evolved a zinc-coordinating structure that stabilizes the LID domain.</text>
</comment>
<comment type="similarity">
    <text evidence="1">Belongs to the adenylate kinase family.</text>
</comment>
<proteinExistence type="inferred from homology"/>
<feature type="chain" id="PRO_0000158737" description="Adenylate kinase">
    <location>
        <begin position="1"/>
        <end position="211"/>
    </location>
</feature>
<feature type="region of interest" description="NMP" evidence="1">
    <location>
        <begin position="30"/>
        <end position="59"/>
    </location>
</feature>
<feature type="region of interest" description="LID" evidence="1">
    <location>
        <begin position="121"/>
        <end position="158"/>
    </location>
</feature>
<feature type="binding site" evidence="1">
    <location>
        <begin position="10"/>
        <end position="15"/>
    </location>
    <ligand>
        <name>ATP</name>
        <dbReference type="ChEBI" id="CHEBI:30616"/>
    </ligand>
</feature>
<feature type="binding site" evidence="1">
    <location>
        <position position="31"/>
    </location>
    <ligand>
        <name>AMP</name>
        <dbReference type="ChEBI" id="CHEBI:456215"/>
    </ligand>
</feature>
<feature type="binding site" evidence="1">
    <location>
        <position position="36"/>
    </location>
    <ligand>
        <name>AMP</name>
        <dbReference type="ChEBI" id="CHEBI:456215"/>
    </ligand>
</feature>
<feature type="binding site" evidence="1">
    <location>
        <begin position="57"/>
        <end position="59"/>
    </location>
    <ligand>
        <name>AMP</name>
        <dbReference type="ChEBI" id="CHEBI:456215"/>
    </ligand>
</feature>
<feature type="binding site" evidence="1">
    <location>
        <begin position="85"/>
        <end position="88"/>
    </location>
    <ligand>
        <name>AMP</name>
        <dbReference type="ChEBI" id="CHEBI:456215"/>
    </ligand>
</feature>
<feature type="binding site" evidence="1">
    <location>
        <position position="92"/>
    </location>
    <ligand>
        <name>AMP</name>
        <dbReference type="ChEBI" id="CHEBI:456215"/>
    </ligand>
</feature>
<feature type="binding site" evidence="1">
    <location>
        <position position="122"/>
    </location>
    <ligand>
        <name>ATP</name>
        <dbReference type="ChEBI" id="CHEBI:30616"/>
    </ligand>
</feature>
<feature type="binding site" evidence="1">
    <location>
        <position position="125"/>
    </location>
    <ligand>
        <name>Zn(2+)</name>
        <dbReference type="ChEBI" id="CHEBI:29105"/>
        <note>structural</note>
    </ligand>
</feature>
<feature type="binding site" evidence="1">
    <location>
        <position position="128"/>
    </location>
    <ligand>
        <name>Zn(2+)</name>
        <dbReference type="ChEBI" id="CHEBI:29105"/>
        <note>structural</note>
    </ligand>
</feature>
<feature type="binding site" evidence="1">
    <location>
        <begin position="131"/>
        <end position="132"/>
    </location>
    <ligand>
        <name>ATP</name>
        <dbReference type="ChEBI" id="CHEBI:30616"/>
    </ligand>
</feature>
<feature type="binding site" evidence="1">
    <location>
        <position position="145"/>
    </location>
    <ligand>
        <name>Zn(2+)</name>
        <dbReference type="ChEBI" id="CHEBI:29105"/>
        <note>structural</note>
    </ligand>
</feature>
<feature type="binding site" evidence="1">
    <location>
        <position position="148"/>
    </location>
    <ligand>
        <name>Zn(2+)</name>
        <dbReference type="ChEBI" id="CHEBI:29105"/>
        <note>structural</note>
    </ligand>
</feature>
<feature type="binding site" evidence="1">
    <location>
        <position position="155"/>
    </location>
    <ligand>
        <name>AMP</name>
        <dbReference type="ChEBI" id="CHEBI:456215"/>
    </ligand>
</feature>
<feature type="binding site" evidence="1">
    <location>
        <position position="166"/>
    </location>
    <ligand>
        <name>AMP</name>
        <dbReference type="ChEBI" id="CHEBI:456215"/>
    </ligand>
</feature>
<feature type="binding site" evidence="1">
    <location>
        <position position="194"/>
    </location>
    <ligand>
        <name>ATP</name>
        <dbReference type="ChEBI" id="CHEBI:30616"/>
    </ligand>
</feature>
<sequence>MGLVFLGPPGSGKGTISKIISNEFKYQHISTGDLFRENILNSTALGQEIKKIVERGELVPDLITIKIVEDKIKAIKKNKDFILDGFPRNICQAEALDKFLPNVKIINFLIDEELVIKRLSGRRICKSCNNIFNIYTLTTKKNGICDVCGGDLYQREDDKEECLKTRLKEYKLQTKPLIEFYSKCSRLNNVDASVKIDEIKKKIIKIMLKKN</sequence>
<evidence type="ECO:0000255" key="1">
    <source>
        <dbReference type="HAMAP-Rule" id="MF_00235"/>
    </source>
</evidence>
<organism>
    <name type="scientific">Borreliella burgdorferi (strain ATCC 35210 / DSM 4680 / CIP 102532 / B31)</name>
    <name type="common">Borrelia burgdorferi</name>
    <dbReference type="NCBI Taxonomy" id="224326"/>
    <lineage>
        <taxon>Bacteria</taxon>
        <taxon>Pseudomonadati</taxon>
        <taxon>Spirochaetota</taxon>
        <taxon>Spirochaetia</taxon>
        <taxon>Spirochaetales</taxon>
        <taxon>Borreliaceae</taxon>
        <taxon>Borreliella</taxon>
    </lineage>
</organism>
<accession>O51378</accession>
<reference key="1">
    <citation type="journal article" date="1997" name="Nature">
        <title>Genomic sequence of a Lyme disease spirochaete, Borrelia burgdorferi.</title>
        <authorList>
            <person name="Fraser C.M."/>
            <person name="Casjens S."/>
            <person name="Huang W.M."/>
            <person name="Sutton G.G."/>
            <person name="Clayton R.A."/>
            <person name="Lathigra R."/>
            <person name="White O."/>
            <person name="Ketchum K.A."/>
            <person name="Dodson R.J."/>
            <person name="Hickey E.K."/>
            <person name="Gwinn M.L."/>
            <person name="Dougherty B.A."/>
            <person name="Tomb J.-F."/>
            <person name="Fleischmann R.D."/>
            <person name="Richardson D.L."/>
            <person name="Peterson J.D."/>
            <person name="Kerlavage A.R."/>
            <person name="Quackenbush J."/>
            <person name="Salzberg S.L."/>
            <person name="Hanson M."/>
            <person name="van Vugt R."/>
            <person name="Palmer N."/>
            <person name="Adams M.D."/>
            <person name="Gocayne J.D."/>
            <person name="Weidman J.F."/>
            <person name="Utterback T.R."/>
            <person name="Watthey L."/>
            <person name="McDonald L.A."/>
            <person name="Artiach P."/>
            <person name="Bowman C."/>
            <person name="Garland S.A."/>
            <person name="Fujii C."/>
            <person name="Cotton M.D."/>
            <person name="Horst K."/>
            <person name="Roberts K.M."/>
            <person name="Hatch B."/>
            <person name="Smith H.O."/>
            <person name="Venter J.C."/>
        </authorList>
    </citation>
    <scope>NUCLEOTIDE SEQUENCE [LARGE SCALE GENOMIC DNA]</scope>
    <source>
        <strain>ATCC 35210 / DSM 4680 / CIP 102532 / B31</strain>
    </source>
</reference>
<dbReference type="EC" id="2.7.4.3" evidence="1"/>
<dbReference type="EMBL" id="AE000783">
    <property type="protein sequence ID" value="AAC66782.1"/>
    <property type="molecule type" value="Genomic_DNA"/>
</dbReference>
<dbReference type="PIR" id="H70151">
    <property type="entry name" value="H70151"/>
</dbReference>
<dbReference type="RefSeq" id="NP_212551.1">
    <property type="nucleotide sequence ID" value="NC_001318.1"/>
</dbReference>
<dbReference type="RefSeq" id="WP_002655966.1">
    <property type="nucleotide sequence ID" value="NC_001318.1"/>
</dbReference>
<dbReference type="SMR" id="O51378"/>
<dbReference type="STRING" id="224326.BB_0417"/>
<dbReference type="PaxDb" id="224326-BB_0417"/>
<dbReference type="EnsemblBacteria" id="AAC66782">
    <property type="protein sequence ID" value="AAC66782"/>
    <property type="gene ID" value="BB_0417"/>
</dbReference>
<dbReference type="KEGG" id="bbu:BB_0417"/>
<dbReference type="PATRIC" id="fig|224326.49.peg.811"/>
<dbReference type="HOGENOM" id="CLU_032354_1_2_12"/>
<dbReference type="OrthoDB" id="9805030at2"/>
<dbReference type="UniPathway" id="UPA00588">
    <property type="reaction ID" value="UER00649"/>
</dbReference>
<dbReference type="Proteomes" id="UP000001807">
    <property type="component" value="Chromosome"/>
</dbReference>
<dbReference type="GO" id="GO:0005737">
    <property type="term" value="C:cytoplasm"/>
    <property type="evidence" value="ECO:0007669"/>
    <property type="project" value="UniProtKB-SubCell"/>
</dbReference>
<dbReference type="GO" id="GO:0004017">
    <property type="term" value="F:adenylate kinase activity"/>
    <property type="evidence" value="ECO:0007669"/>
    <property type="project" value="UniProtKB-UniRule"/>
</dbReference>
<dbReference type="GO" id="GO:0005524">
    <property type="term" value="F:ATP binding"/>
    <property type="evidence" value="ECO:0007669"/>
    <property type="project" value="UniProtKB-UniRule"/>
</dbReference>
<dbReference type="GO" id="GO:0008270">
    <property type="term" value="F:zinc ion binding"/>
    <property type="evidence" value="ECO:0007669"/>
    <property type="project" value="UniProtKB-UniRule"/>
</dbReference>
<dbReference type="GO" id="GO:0044209">
    <property type="term" value="P:AMP salvage"/>
    <property type="evidence" value="ECO:0007669"/>
    <property type="project" value="UniProtKB-UniRule"/>
</dbReference>
<dbReference type="CDD" id="cd01428">
    <property type="entry name" value="ADK"/>
    <property type="match status" value="1"/>
</dbReference>
<dbReference type="FunFam" id="3.40.50.300:FF:000106">
    <property type="entry name" value="Adenylate kinase mitochondrial"/>
    <property type="match status" value="1"/>
</dbReference>
<dbReference type="Gene3D" id="3.40.50.300">
    <property type="entry name" value="P-loop containing nucleotide triphosphate hydrolases"/>
    <property type="match status" value="1"/>
</dbReference>
<dbReference type="HAMAP" id="MF_00235">
    <property type="entry name" value="Adenylate_kinase_Adk"/>
    <property type="match status" value="1"/>
</dbReference>
<dbReference type="InterPro" id="IPR006259">
    <property type="entry name" value="Adenyl_kin_sub"/>
</dbReference>
<dbReference type="InterPro" id="IPR000850">
    <property type="entry name" value="Adenylat/UMP-CMP_kin"/>
</dbReference>
<dbReference type="InterPro" id="IPR033690">
    <property type="entry name" value="Adenylat_kinase_CS"/>
</dbReference>
<dbReference type="InterPro" id="IPR007862">
    <property type="entry name" value="Adenylate_kinase_lid-dom"/>
</dbReference>
<dbReference type="InterPro" id="IPR036193">
    <property type="entry name" value="ADK_active_lid_dom_sf"/>
</dbReference>
<dbReference type="InterPro" id="IPR027417">
    <property type="entry name" value="P-loop_NTPase"/>
</dbReference>
<dbReference type="NCBIfam" id="TIGR01351">
    <property type="entry name" value="adk"/>
    <property type="match status" value="1"/>
</dbReference>
<dbReference type="NCBIfam" id="NF001381">
    <property type="entry name" value="PRK00279.1-3"/>
    <property type="match status" value="1"/>
</dbReference>
<dbReference type="NCBIfam" id="NF011099">
    <property type="entry name" value="PRK14526.1"/>
    <property type="match status" value="1"/>
</dbReference>
<dbReference type="PANTHER" id="PTHR23359">
    <property type="entry name" value="NUCLEOTIDE KINASE"/>
    <property type="match status" value="1"/>
</dbReference>
<dbReference type="Pfam" id="PF00406">
    <property type="entry name" value="ADK"/>
    <property type="match status" value="1"/>
</dbReference>
<dbReference type="Pfam" id="PF05191">
    <property type="entry name" value="ADK_lid"/>
    <property type="match status" value="1"/>
</dbReference>
<dbReference type="PRINTS" id="PR00094">
    <property type="entry name" value="ADENYLTKNASE"/>
</dbReference>
<dbReference type="SUPFAM" id="SSF57774">
    <property type="entry name" value="Microbial and mitochondrial ADK, insert 'zinc finger' domain"/>
    <property type="match status" value="1"/>
</dbReference>
<dbReference type="SUPFAM" id="SSF52540">
    <property type="entry name" value="P-loop containing nucleoside triphosphate hydrolases"/>
    <property type="match status" value="1"/>
</dbReference>
<dbReference type="PROSITE" id="PS00113">
    <property type="entry name" value="ADENYLATE_KINASE"/>
    <property type="match status" value="1"/>
</dbReference>
<name>KAD_BORBU</name>